<keyword id="KW-0903">Direct protein sequencing</keyword>
<keyword id="KW-1185">Reference proteome</keyword>
<dbReference type="InParanoid" id="P99506"/>
<dbReference type="Proteomes" id="UP000002254">
    <property type="component" value="Unplaced"/>
</dbReference>
<dbReference type="Proteomes" id="UP000694429">
    <property type="component" value="Unplaced"/>
</dbReference>
<dbReference type="Proteomes" id="UP000694542">
    <property type="component" value="Unplaced"/>
</dbReference>
<dbReference type="Proteomes" id="UP000805418">
    <property type="component" value="Unplaced"/>
</dbReference>
<sequence>XLKGKVXVAXNQYL</sequence>
<accession>P99506</accession>
<comment type="miscellaneous">
    <text>On the 2D-gel the determined pI of this unknown protein is: 6.5, its MW is: 28.2 kDa.</text>
</comment>
<protein>
    <recommendedName>
        <fullName>Unknown protein from spot 6109 of 2D-PAGE of heart tissue</fullName>
    </recommendedName>
</protein>
<proteinExistence type="evidence at protein level"/>
<name>UHA2_CANLF</name>
<feature type="chain" id="PRO_0000055479" description="Unknown protein from spot 6109 of 2D-PAGE of heart tissue">
    <location>
        <begin position="1"/>
        <end position="14" status="greater than"/>
    </location>
</feature>
<feature type="non-terminal residue">
    <location>
        <position position="14"/>
    </location>
</feature>
<organism>
    <name type="scientific">Canis lupus familiaris</name>
    <name type="common">Dog</name>
    <name type="synonym">Canis familiaris</name>
    <dbReference type="NCBI Taxonomy" id="9615"/>
    <lineage>
        <taxon>Eukaryota</taxon>
        <taxon>Metazoa</taxon>
        <taxon>Chordata</taxon>
        <taxon>Craniata</taxon>
        <taxon>Vertebrata</taxon>
        <taxon>Euteleostomi</taxon>
        <taxon>Mammalia</taxon>
        <taxon>Eutheria</taxon>
        <taxon>Laurasiatheria</taxon>
        <taxon>Carnivora</taxon>
        <taxon>Caniformia</taxon>
        <taxon>Canidae</taxon>
        <taxon>Canis</taxon>
    </lineage>
</organism>
<reference key="1">
    <citation type="journal article" date="1997" name="Electrophoresis">
        <title>HSC-2DPAGE and the two-dimensional gel electrophoresis database of dog heart proteins.</title>
        <authorList>
            <person name="Dunn M.J."/>
            <person name="Corbett J.M."/>
            <person name="Wheeler C.H."/>
        </authorList>
    </citation>
    <scope>PROTEIN SEQUENCE</scope>
    <source>
        <tissue>Heart</tissue>
    </source>
</reference>